<accession>Q6YXP7</accession>
<geneLocation type="chloroplast"/>
<gene>
    <name evidence="1" type="primary">ndhH</name>
</gene>
<organism>
    <name type="scientific">Physcomitrium patens</name>
    <name type="common">Spreading-leaved earth moss</name>
    <name type="synonym">Physcomitrella patens</name>
    <dbReference type="NCBI Taxonomy" id="3218"/>
    <lineage>
        <taxon>Eukaryota</taxon>
        <taxon>Viridiplantae</taxon>
        <taxon>Streptophyta</taxon>
        <taxon>Embryophyta</taxon>
        <taxon>Bryophyta</taxon>
        <taxon>Bryophytina</taxon>
        <taxon>Bryopsida</taxon>
        <taxon>Funariidae</taxon>
        <taxon>Funariales</taxon>
        <taxon>Funariaceae</taxon>
        <taxon>Physcomitrium</taxon>
    </lineage>
</organism>
<name>NDHH_PHYPA</name>
<reference key="1">
    <citation type="journal article" date="2003" name="Nucleic Acids Res.">
        <title>Complete chloroplast DNA sequence of the moss Physcomitrella patens: evidence for the loss and relocation of rpoA from the chloroplast to the nucleus.</title>
        <authorList>
            <person name="Sugiura C."/>
            <person name="Kobayashi Y."/>
            <person name="Setsuyuki A."/>
            <person name="Sugita C."/>
            <person name="Sugita M."/>
        </authorList>
    </citation>
    <scope>NUCLEOTIDE SEQUENCE [LARGE SCALE GENOMIC DNA]</scope>
    <source>
        <strain>cv. Gransden 2004</strain>
    </source>
</reference>
<protein>
    <recommendedName>
        <fullName evidence="1">NAD(P)H-quinone oxidoreductase subunit H, chloroplastic</fullName>
        <ecNumber evidence="1">7.1.1.-</ecNumber>
    </recommendedName>
    <alternativeName>
        <fullName>NAD(P)H dehydrogenase subunit H</fullName>
    </alternativeName>
    <alternativeName>
        <fullName evidence="1">NADH-plastoquinone oxidoreductase 49 kDa subunit</fullName>
    </alternativeName>
    <alternativeName>
        <fullName evidence="1">NADH-plastoquinone oxidoreductase subunit H</fullName>
    </alternativeName>
</protein>
<evidence type="ECO:0000255" key="1">
    <source>
        <dbReference type="HAMAP-Rule" id="MF_01358"/>
    </source>
</evidence>
<proteinExistence type="inferred from homology"/>
<feature type="chain" id="PRO_0000358020" description="NAD(P)H-quinone oxidoreductase subunit H, chloroplastic">
    <location>
        <begin position="1"/>
        <end position="391"/>
    </location>
</feature>
<keyword id="KW-0150">Chloroplast</keyword>
<keyword id="KW-0472">Membrane</keyword>
<keyword id="KW-0520">NAD</keyword>
<keyword id="KW-0521">NADP</keyword>
<keyword id="KW-0934">Plastid</keyword>
<keyword id="KW-0618">Plastoquinone</keyword>
<keyword id="KW-0874">Quinone</keyword>
<keyword id="KW-1185">Reference proteome</keyword>
<keyword id="KW-0793">Thylakoid</keyword>
<keyword id="KW-1278">Translocase</keyword>
<keyword id="KW-0813">Transport</keyword>
<dbReference type="EC" id="7.1.1.-" evidence="1"/>
<dbReference type="EMBL" id="AP005672">
    <property type="protein sequence ID" value="BAC85094.1"/>
    <property type="molecule type" value="Genomic_DNA"/>
</dbReference>
<dbReference type="RefSeq" id="NP_904244.1">
    <property type="nucleotide sequence ID" value="NC_005087.2"/>
</dbReference>
<dbReference type="RefSeq" id="YP_009477574.1">
    <property type="nucleotide sequence ID" value="NC_037465.1"/>
</dbReference>
<dbReference type="SMR" id="Q6YXP7"/>
<dbReference type="FunCoup" id="Q6YXP7">
    <property type="interactions" value="11"/>
</dbReference>
<dbReference type="STRING" id="3218.Q6YXP7"/>
<dbReference type="GeneID" id="2546731"/>
<dbReference type="GeneID" id="36487219"/>
<dbReference type="KEGG" id="ppp:2546731"/>
<dbReference type="InParanoid" id="Q6YXP7"/>
<dbReference type="OrthoDB" id="1845069at2759"/>
<dbReference type="Proteomes" id="UP000006727">
    <property type="component" value="Chloroplast"/>
</dbReference>
<dbReference type="GO" id="GO:0009535">
    <property type="term" value="C:chloroplast thylakoid membrane"/>
    <property type="evidence" value="ECO:0007669"/>
    <property type="project" value="UniProtKB-SubCell"/>
</dbReference>
<dbReference type="GO" id="GO:0051287">
    <property type="term" value="F:NAD binding"/>
    <property type="evidence" value="ECO:0007669"/>
    <property type="project" value="InterPro"/>
</dbReference>
<dbReference type="GO" id="GO:0016655">
    <property type="term" value="F:oxidoreductase activity, acting on NAD(P)H, quinone or similar compound as acceptor"/>
    <property type="evidence" value="ECO:0007669"/>
    <property type="project" value="UniProtKB-UniRule"/>
</dbReference>
<dbReference type="GO" id="GO:0048038">
    <property type="term" value="F:quinone binding"/>
    <property type="evidence" value="ECO:0007669"/>
    <property type="project" value="UniProtKB-KW"/>
</dbReference>
<dbReference type="GO" id="GO:0019684">
    <property type="term" value="P:photosynthesis, light reaction"/>
    <property type="evidence" value="ECO:0007669"/>
    <property type="project" value="UniProtKB-UniRule"/>
</dbReference>
<dbReference type="Gene3D" id="1.10.645.10">
    <property type="entry name" value="Cytochrome-c3 Hydrogenase, chain B"/>
    <property type="match status" value="1"/>
</dbReference>
<dbReference type="HAMAP" id="MF_01358">
    <property type="entry name" value="NDH1_NuoD"/>
    <property type="match status" value="1"/>
</dbReference>
<dbReference type="InterPro" id="IPR001135">
    <property type="entry name" value="NADH_Q_OxRdtase_suD"/>
</dbReference>
<dbReference type="InterPro" id="IPR014029">
    <property type="entry name" value="NADH_UbQ_OxRdtase_49kDa_CS"/>
</dbReference>
<dbReference type="InterPro" id="IPR022885">
    <property type="entry name" value="NDH1_su_D/H"/>
</dbReference>
<dbReference type="InterPro" id="IPR029014">
    <property type="entry name" value="NiFe-Hase_large"/>
</dbReference>
<dbReference type="NCBIfam" id="TIGR01962">
    <property type="entry name" value="NuoD"/>
    <property type="match status" value="1"/>
</dbReference>
<dbReference type="NCBIfam" id="NF004739">
    <property type="entry name" value="PRK06075.1"/>
    <property type="match status" value="1"/>
</dbReference>
<dbReference type="NCBIfam" id="NF005649">
    <property type="entry name" value="PRK07415.1"/>
    <property type="match status" value="1"/>
</dbReference>
<dbReference type="PANTHER" id="PTHR11993:SF10">
    <property type="entry name" value="NADH DEHYDROGENASE [UBIQUINONE] IRON-SULFUR PROTEIN 2, MITOCHONDRIAL"/>
    <property type="match status" value="1"/>
</dbReference>
<dbReference type="PANTHER" id="PTHR11993">
    <property type="entry name" value="NADH-UBIQUINONE OXIDOREDUCTASE 49 KDA SUBUNIT"/>
    <property type="match status" value="1"/>
</dbReference>
<dbReference type="Pfam" id="PF00346">
    <property type="entry name" value="Complex1_49kDa"/>
    <property type="match status" value="1"/>
</dbReference>
<dbReference type="SUPFAM" id="SSF56762">
    <property type="entry name" value="HydB/Nqo4-like"/>
    <property type="match status" value="1"/>
</dbReference>
<dbReference type="PROSITE" id="PS00535">
    <property type="entry name" value="COMPLEX1_49K"/>
    <property type="match status" value="1"/>
</dbReference>
<sequence>MLATKTKPMIVSMGPHHPSMHGVLRLIVTLDGENVIDCEPILGYLHRGMEKIAENRTIVQYLPYVTRWDYLATMFTEAITVNAPEKLTNIQVPKRASYIRMIMLELSRVASHLLWLGPFMADIGAQTPFFYILREREMIYDLFEAATGMRMMHNYFRIGGVAVDLPYGWIDKCLDFCDYFLPKVNEYERLITNNPIFLKRVEGIGIIGKEEAINWGLSGPMLRASGVQWDLRKVDHYECYDELDWQIQWQKEGDSLARYLVRIGEMKESIKIIQQALKSIPGGPYENLEARRLQRGKKSEWNNFEYQFISKKPSPTFKLPKQEHYIRVEAPKGELGVFLIGDDSVFPWRWKIRPPGFINLQILPQLVKGMKLADIMTILGSIDIIMGEVDR</sequence>
<comment type="function">
    <text evidence="1">NDH shuttles electrons from NAD(P)H:plastoquinone, via FMN and iron-sulfur (Fe-S) centers, to quinones in the photosynthetic chain and possibly in a chloroplast respiratory chain. The immediate electron acceptor for the enzyme in this species is believed to be plastoquinone. Couples the redox reaction to proton translocation, and thus conserves the redox energy in a proton gradient.</text>
</comment>
<comment type="catalytic activity">
    <reaction evidence="1">
        <text>a plastoquinone + NADH + (n+1) H(+)(in) = a plastoquinol + NAD(+) + n H(+)(out)</text>
        <dbReference type="Rhea" id="RHEA:42608"/>
        <dbReference type="Rhea" id="RHEA-COMP:9561"/>
        <dbReference type="Rhea" id="RHEA-COMP:9562"/>
        <dbReference type="ChEBI" id="CHEBI:15378"/>
        <dbReference type="ChEBI" id="CHEBI:17757"/>
        <dbReference type="ChEBI" id="CHEBI:57540"/>
        <dbReference type="ChEBI" id="CHEBI:57945"/>
        <dbReference type="ChEBI" id="CHEBI:62192"/>
    </reaction>
</comment>
<comment type="catalytic activity">
    <reaction evidence="1">
        <text>a plastoquinone + NADPH + (n+1) H(+)(in) = a plastoquinol + NADP(+) + n H(+)(out)</text>
        <dbReference type="Rhea" id="RHEA:42612"/>
        <dbReference type="Rhea" id="RHEA-COMP:9561"/>
        <dbReference type="Rhea" id="RHEA-COMP:9562"/>
        <dbReference type="ChEBI" id="CHEBI:15378"/>
        <dbReference type="ChEBI" id="CHEBI:17757"/>
        <dbReference type="ChEBI" id="CHEBI:57783"/>
        <dbReference type="ChEBI" id="CHEBI:58349"/>
        <dbReference type="ChEBI" id="CHEBI:62192"/>
    </reaction>
</comment>
<comment type="subunit">
    <text evidence="1">NDH is composed of at least 16 different subunits, 5 of which are encoded in the nucleus.</text>
</comment>
<comment type="subcellular location">
    <subcellularLocation>
        <location evidence="1">Plastid</location>
        <location evidence="1">Chloroplast thylakoid membrane</location>
        <topology evidence="1">Peripheral membrane protein</topology>
        <orientation evidence="1">Stromal side</orientation>
    </subcellularLocation>
</comment>
<comment type="similarity">
    <text evidence="1">Belongs to the complex I 49 kDa subunit family.</text>
</comment>